<proteinExistence type="inferred from homology"/>
<keyword id="KW-0010">Activator</keyword>
<keyword id="KW-0238">DNA-binding</keyword>
<keyword id="KW-0614">Plasmid</keyword>
<keyword id="KW-1185">Reference proteome</keyword>
<keyword id="KW-0804">Transcription</keyword>
<keyword id="KW-0805">Transcription regulation</keyword>
<accession>Q9ZN79</accession>
<accession>D4Z914</accession>
<organism>
    <name type="scientific">Sphingobium indicum (strain DSM 16413 / CCM 7287 / MTCC 6362 / UT26 / NBRC 101211 / UT26S)</name>
    <name type="common">Sphingobium japonicum</name>
    <dbReference type="NCBI Taxonomy" id="452662"/>
    <lineage>
        <taxon>Bacteria</taxon>
        <taxon>Pseudomonadati</taxon>
        <taxon>Pseudomonadota</taxon>
        <taxon>Alphaproteobacteria</taxon>
        <taxon>Sphingomonadales</taxon>
        <taxon>Sphingomonadaceae</taxon>
        <taxon>Sphingobium</taxon>
    </lineage>
</organism>
<dbReference type="EMBL" id="AB021863">
    <property type="protein sequence ID" value="BAA36280.1"/>
    <property type="molecule type" value="Genomic_DNA"/>
</dbReference>
<dbReference type="EMBL" id="AP010805">
    <property type="protein sequence ID" value="BAI99096.1"/>
    <property type="molecule type" value="Genomic_DNA"/>
</dbReference>
<dbReference type="SMR" id="Q9ZN79"/>
<dbReference type="KEGG" id="sjp:SJA_P1-01440"/>
<dbReference type="HOGENOM" id="CLU_039613_39_0_5"/>
<dbReference type="Proteomes" id="UP000007753">
    <property type="component" value="Plasmid pCHQ1"/>
</dbReference>
<dbReference type="GO" id="GO:0003677">
    <property type="term" value="F:DNA binding"/>
    <property type="evidence" value="ECO:0007669"/>
    <property type="project" value="UniProtKB-KW"/>
</dbReference>
<dbReference type="GO" id="GO:0003700">
    <property type="term" value="F:DNA-binding transcription factor activity"/>
    <property type="evidence" value="ECO:0007669"/>
    <property type="project" value="InterPro"/>
</dbReference>
<dbReference type="CDD" id="cd08459">
    <property type="entry name" value="PBP2_DntR_NahR_LinR_like"/>
    <property type="match status" value="1"/>
</dbReference>
<dbReference type="Gene3D" id="3.40.190.10">
    <property type="entry name" value="Periplasmic binding protein-like II"/>
    <property type="match status" value="2"/>
</dbReference>
<dbReference type="Gene3D" id="1.10.10.10">
    <property type="entry name" value="Winged helix-like DNA-binding domain superfamily/Winged helix DNA-binding domain"/>
    <property type="match status" value="1"/>
</dbReference>
<dbReference type="InterPro" id="IPR050389">
    <property type="entry name" value="LysR-type_TF"/>
</dbReference>
<dbReference type="InterPro" id="IPR005119">
    <property type="entry name" value="LysR_subst-bd"/>
</dbReference>
<dbReference type="InterPro" id="IPR000847">
    <property type="entry name" value="Tscrpt_reg_HTH_LysR"/>
</dbReference>
<dbReference type="InterPro" id="IPR036388">
    <property type="entry name" value="WH-like_DNA-bd_sf"/>
</dbReference>
<dbReference type="InterPro" id="IPR036390">
    <property type="entry name" value="WH_DNA-bd_sf"/>
</dbReference>
<dbReference type="PANTHER" id="PTHR30118">
    <property type="entry name" value="HTH-TYPE TRANSCRIPTIONAL REGULATOR LEUO-RELATED"/>
    <property type="match status" value="1"/>
</dbReference>
<dbReference type="PANTHER" id="PTHR30118:SF15">
    <property type="entry name" value="TRANSCRIPTIONAL REGULATORY PROTEIN"/>
    <property type="match status" value="1"/>
</dbReference>
<dbReference type="Pfam" id="PF00126">
    <property type="entry name" value="HTH_1"/>
    <property type="match status" value="1"/>
</dbReference>
<dbReference type="Pfam" id="PF03466">
    <property type="entry name" value="LysR_substrate"/>
    <property type="match status" value="1"/>
</dbReference>
<dbReference type="PRINTS" id="PR00039">
    <property type="entry name" value="HTHLYSR"/>
</dbReference>
<dbReference type="SUPFAM" id="SSF53850">
    <property type="entry name" value="Periplasmic binding protein-like II"/>
    <property type="match status" value="1"/>
</dbReference>
<dbReference type="SUPFAM" id="SSF46785">
    <property type="entry name" value="Winged helix' DNA-binding domain"/>
    <property type="match status" value="1"/>
</dbReference>
<dbReference type="PROSITE" id="PS50931">
    <property type="entry name" value="HTH_LYSR"/>
    <property type="match status" value="1"/>
</dbReference>
<evidence type="ECO:0000255" key="1">
    <source>
        <dbReference type="PROSITE-ProRule" id="PRU00253"/>
    </source>
</evidence>
<evidence type="ECO:0000269" key="2">
    <source>
    </source>
</evidence>
<evidence type="ECO:0000305" key="3"/>
<evidence type="ECO:0000312" key="4">
    <source>
        <dbReference type="EMBL" id="BAI99096.1"/>
    </source>
</evidence>
<protein>
    <recommendedName>
        <fullName>HTH-type transcriptional regulator LinR</fullName>
    </recommendedName>
</protein>
<gene>
    <name type="primary">linR</name>
    <name evidence="4" type="ordered locus">SJA_P1-01440</name>
</gene>
<sequence length="303" mass="33638">MNIDDLDFRHLVLLDALLKRHSVSAAARELDLPQPTASHGLARLRKALGDPLLVRARDGMEPTPRAEAIAGVVQQLLELRRDLAEGGQTFSPDRLKREFIIAGSDIAHLVVLTALHSAARFEAPHTSYRALTLSGDEMVSALETGHVDIAVGAYPSLVAGIKTQRLYQEEYLCFGKEGHPFIKSGETDDFMAADHIVVSTKGMAHAHRAVERALLDKIHPDRIRIVASSFLVALAACFESDLILTAPARVIGRLAEVYGLRAVRPPILMEAFEVRQYWHARNQDDPPHRWLRQLLHKVLSARM</sequence>
<reference key="1">
    <citation type="journal article" date="2002" name="Appl. Environ. Microbiol.">
        <title>Cloning and characterization of linR, involved in regulation of the downstream pathway for gamma-hexachlorocyclohexane degradation in Sphingomonas paucimobilis UT26.</title>
        <authorList>
            <person name="Miyauchi K."/>
            <person name="Lee H.-S."/>
            <person name="Fukuda M."/>
            <person name="Takagi M."/>
            <person name="Nagata Y."/>
        </authorList>
    </citation>
    <scope>NUCLEOTIDE SEQUENCE [GENOMIC DNA]</scope>
    <scope>FUNCTION</scope>
    <source>
        <strain>DSM 16413 / CCM 7287 / MTCC 6362 / UT26 / NBRC 101211 / UT26S</strain>
    </source>
</reference>
<reference key="2">
    <citation type="journal article" date="2010" name="J. Bacteriol.">
        <title>Complete genome sequence of the representative gamma-hexachlorocyclohexane-degrading bacterium Sphingobium japonicum UT26.</title>
        <authorList>
            <person name="Nagata Y."/>
            <person name="Ohtsubo Y."/>
            <person name="Endo R."/>
            <person name="Ichikawa N."/>
            <person name="Ankai A."/>
            <person name="Oguchi A."/>
            <person name="Fukui S."/>
            <person name="Fujita N."/>
            <person name="Tsuda M."/>
        </authorList>
    </citation>
    <scope>NUCLEOTIDE SEQUENCE [LARGE SCALE GENOMIC DNA]</scope>
    <source>
        <strain>DSM 16413 / CCM 7287 / MTCC 6362 / UT26 / NBRC 101211 / UT26S</strain>
        <plasmid>pCHQ1</plasmid>
    </source>
</reference>
<geneLocation type="plasmid">
    <name>pCHQ1</name>
</geneLocation>
<feature type="chain" id="PRO_0000105662" description="HTH-type transcriptional regulator LinR">
    <location>
        <begin position="1"/>
        <end position="303"/>
    </location>
</feature>
<feature type="domain" description="HTH lysR-type" evidence="1">
    <location>
        <begin position="6"/>
        <end position="63"/>
    </location>
</feature>
<feature type="DNA-binding region" description="H-T-H motif" evidence="1">
    <location>
        <begin position="23"/>
        <end position="42"/>
    </location>
</feature>
<feature type="sequence conflict" description="In Ref. 1; BAA36280." ref="1">
    <original>M</original>
    <variation>T</variation>
    <location>
        <position position="191"/>
    </location>
</feature>
<feature type="sequence conflict" description="In Ref. 1; BAA36280." ref="1">
    <original>I</original>
    <variation>T</variation>
    <location>
        <position position="251"/>
    </location>
</feature>
<comment type="function">
    <text evidence="2">Positively regulates the transcription of the linD and linE genes that are involved in gamma-hexachlorocyclohexane (gamma-HCH or lindane) degradation. This degradation pathway allows S.japonicum UT26 to grow on gamma-HCH as the sole source of carbon and energy.</text>
</comment>
<comment type="similarity">
    <text evidence="3">Belongs to the LysR transcriptional regulatory family.</text>
</comment>
<name>LINR_SPHIU</name>